<evidence type="ECO:0000255" key="1">
    <source>
        <dbReference type="HAMAP-Rule" id="MF_04011"/>
    </source>
</evidence>
<accession>Q18LF7</accession>
<feature type="chain" id="PRO_0000408166" description="DNA primase">
    <location>
        <begin position="1"/>
        <end position="975"/>
    </location>
</feature>
<feature type="zinc finger region" description="CHC2-type" evidence="1">
    <location>
        <begin position="919"/>
        <end position="958"/>
    </location>
</feature>
<feature type="site" description="Essential for primase activity" evidence="1">
    <location>
        <position position="624"/>
    </location>
</feature>
<feature type="site" description="Essential for primase activity" evidence="1">
    <location>
        <position position="626"/>
    </location>
</feature>
<comment type="function">
    <text evidence="1">Essential component of the helicase/primase complex. Unwinds the DNA at the replication forks and generates single-stranded DNA for both leading and lagging strand synthesis. The primase initiates primer synthesis and thereby produces large amount of short RNA primers on the lagging strand that the polymerase elongates using dNTPs.</text>
</comment>
<comment type="subunit">
    <text evidence="1">Associates with the helicase and the primase-associated factor to form the helicase-primase factor.</text>
</comment>
<comment type="subcellular location">
    <subcellularLocation>
        <location evidence="1">Host nucleus</location>
    </subcellularLocation>
    <text evidence="1">Requires the presence of the primase associated factor to properly localize in the host cell nucleus.</text>
</comment>
<comment type="similarity">
    <text evidence="1">Belongs to the herpesviridae DNA primase family.</text>
</comment>
<dbReference type="EC" id="2.7.7.-" evidence="1"/>
<dbReference type="EMBL" id="AF322977">
    <property type="protein sequence ID" value="ABG36562.1"/>
    <property type="molecule type" value="Genomic_DNA"/>
</dbReference>
<dbReference type="GO" id="GO:0042025">
    <property type="term" value="C:host cell nucleus"/>
    <property type="evidence" value="ECO:0007669"/>
    <property type="project" value="UniProtKB-SubCell"/>
</dbReference>
<dbReference type="GO" id="GO:0005524">
    <property type="term" value="F:ATP binding"/>
    <property type="evidence" value="ECO:0007669"/>
    <property type="project" value="UniProtKB-KW"/>
</dbReference>
<dbReference type="GO" id="GO:0003899">
    <property type="term" value="F:DNA-directed RNA polymerase activity"/>
    <property type="evidence" value="ECO:0007669"/>
    <property type="project" value="InterPro"/>
</dbReference>
<dbReference type="GO" id="GO:0004386">
    <property type="term" value="F:helicase activity"/>
    <property type="evidence" value="ECO:0007669"/>
    <property type="project" value="UniProtKB-KW"/>
</dbReference>
<dbReference type="GO" id="GO:0016787">
    <property type="term" value="F:hydrolase activity"/>
    <property type="evidence" value="ECO:0007669"/>
    <property type="project" value="UniProtKB-KW"/>
</dbReference>
<dbReference type="GO" id="GO:0008270">
    <property type="term" value="F:zinc ion binding"/>
    <property type="evidence" value="ECO:0007669"/>
    <property type="project" value="UniProtKB-KW"/>
</dbReference>
<dbReference type="GO" id="GO:0039686">
    <property type="term" value="P:bidirectional double-stranded viral DNA replication"/>
    <property type="evidence" value="ECO:0007669"/>
    <property type="project" value="InterPro"/>
</dbReference>
<dbReference type="GO" id="GO:0006260">
    <property type="term" value="P:DNA replication"/>
    <property type="evidence" value="ECO:0007669"/>
    <property type="project" value="UniProtKB-KW"/>
</dbReference>
<dbReference type="HAMAP" id="MF_04011">
    <property type="entry name" value="HSV_PRIM"/>
    <property type="match status" value="1"/>
</dbReference>
<dbReference type="InterPro" id="IPR033685">
    <property type="entry name" value="HSV_PRIM"/>
</dbReference>
<dbReference type="Pfam" id="PF03121">
    <property type="entry name" value="Herpes_UL52"/>
    <property type="match status" value="1"/>
</dbReference>
<keyword id="KW-0067">ATP-binding</keyword>
<keyword id="KW-0235">DNA replication</keyword>
<keyword id="KW-0347">Helicase</keyword>
<keyword id="KW-1048">Host nucleus</keyword>
<keyword id="KW-0378">Hydrolase</keyword>
<keyword id="KW-0479">Metal-binding</keyword>
<keyword id="KW-0547">Nucleotide-binding</keyword>
<keyword id="KW-0808">Transferase</keyword>
<keyword id="KW-0862">Zinc</keyword>
<keyword id="KW-0863">Zinc-finger</keyword>
<name>PRIM_ELHVK</name>
<sequence length="975" mass="112193">MTIQVLFATEYDSANIVISLLCGVEVDHDLYPILYKRINYNNGASNNDGSRSGAINFDDRVNDEDSRLNAPVDDTIEFCLQTQSCEDSIRIRPVFYCHAHALNFETRYRTHEVLGSATLLQCLDESRTLTMYRRILSEIITEPSSASEKRNPAPTNLRHLVYFHRDVLVKYLTENFIMPTSPAWFISVFGSYEASLVLTMHYYLLERQYSTVQTTQHYAKCFTGDMGKPLVSCYSMKDFMIMIQSSAFLGKTAKFTHYCKLKNDRDLQELMAIDASINAFRQNVCLTEAEHVHFMYLAFGTALAKTKFLDYTLKTSLLSNNDDQTNNCNDYIVDNCAVDNHCQNDIDEIIIPRSSTNRTFAISEVSYDRSNSTSSSGVYSMDSCDESRGSEDSAMCSLYESRYLSHNLKKELLNIMELYFTPTSYLNIYVKVHKHESKSPLFEGYSIDTCSEKGTVFSGTSTSMADRLRKGNKMFEGLFEETDSEGVSSVLNIIASNRHAILPRCEDDDSCGKSTSGMPNRICKREIVFPGLTRPAPMYRTDGFNNMQICRYFSVVSKENWFSNSNLTDVLNMVPDEYVSDERLTESVWVPDVKVSSPRLSEQLYRSRHEMFNDRLPVYNFVGDVDLKVTGPVSKDWMFSFCRTLRRIILETFEHLFEKIDHGEHPVYFFKSGCEPENGSFCACSEKIGLRVITPFPRNTCILGGKTMKHLCEIINHILFLDKEMFSLVNVTVVDKNCFDYGIYSHGKSVRLPMMSKVDENLGFLQNRLLPLFIVPDSYRHGGRHKVFVRDQLNISNWLHHNASGTAYDPCKTISYVLSIDDVGRAQDVSFIDHKLNKLLKKEYVHIDTIIELFKSKYDISETRYFIEKIVWPQFLRTIKTNYHSAAGNQFNNVCFDDTSWPCVQLFKIHQGTRRNFSCIQHDHRDGRENVQFFLDFRPESATTIWTTLWSRCFSRKCKSNAKNVHVSHKLTIQQ</sequence>
<proteinExistence type="inferred from homology"/>
<protein>
    <recommendedName>
        <fullName evidence="1">DNA primase</fullName>
        <ecNumber evidence="1">2.7.7.-</ecNumber>
    </recommendedName>
</protein>
<organismHost>
    <name type="scientific">Elephas maximus</name>
    <name type="common">Indian elephant</name>
    <dbReference type="NCBI Taxonomy" id="9783"/>
</organismHost>
<organismHost>
    <name type="scientific">Loxodonta africana</name>
    <name type="common">African elephant</name>
    <dbReference type="NCBI Taxonomy" id="9785"/>
</organismHost>
<organismHost>
    <name type="scientific">Loxodonta cyclotis</name>
    <name type="common">African forest elephant</name>
    <dbReference type="NCBI Taxonomy" id="99490"/>
</organismHost>
<reference key="1">
    <citation type="journal article" date="2007" name="J. Virol.">
        <title>Identification of novel rodent herpesviruses, including the first gammaherpesvirus of Mus musculus.</title>
        <authorList>
            <person name="Ehlers B."/>
            <person name="Kuchler J."/>
            <person name="Yasmum N."/>
            <person name="Dural G."/>
            <person name="Voigt S."/>
            <person name="Schmidt-Chanasit J."/>
            <person name="Jakel T."/>
            <person name="Matuschka F.R."/>
            <person name="Richter D."/>
            <person name="Essbauer S."/>
            <person name="Hughes D.J."/>
            <person name="Summers C."/>
            <person name="Bennett M."/>
            <person name="Stewart J.P."/>
            <person name="Ulrich R.G."/>
        </authorList>
    </citation>
    <scope>NUCLEOTIDE SEQUENCE [GENOMIC DNA]</scope>
</reference>
<reference key="2">
    <citation type="journal article" date="2001" name="J. Gen. Virol.">
        <title>Genetic and ultrastructural characterization of a European isolate of the fatal endotheliotropic elephant herpesvirus.</title>
        <authorList>
            <person name="Ehlers B."/>
            <person name="Burkhardt S."/>
            <person name="Goltz M."/>
            <person name="Bergmann V."/>
            <person name="Ochs A."/>
            <person name="Weiler H."/>
            <person name="Hentschke J."/>
        </authorList>
    </citation>
    <scope>NUCLEOTIDE SEQUENCE [GENOMIC DNA]</scope>
</reference>
<organism>
    <name type="scientific">Elephantid herpesvirus 1 (isolate Asian elephant/Berlin/Kiba/1998)</name>
    <name type="common">EIHV-1</name>
    <name type="synonym">Elephant endotheliotropic herpesvirus</name>
    <dbReference type="NCBI Taxonomy" id="654902"/>
    <lineage>
        <taxon>Viruses</taxon>
        <taxon>Duplodnaviria</taxon>
        <taxon>Heunggongvirae</taxon>
        <taxon>Peploviricota</taxon>
        <taxon>Herviviricetes</taxon>
        <taxon>Herpesvirales</taxon>
        <taxon>Orthoherpesviridae</taxon>
        <taxon>Betaherpesvirinae</taxon>
        <taxon>Proboscivirus</taxon>
        <taxon>Proboscivirus elephantidbeta1</taxon>
        <taxon>Elephantid herpesvirus 1</taxon>
    </lineage>
</organism>